<feature type="chain" id="PRO_0000375720" description="Succinyl-diaminopimelate desuccinylase">
    <location>
        <begin position="1"/>
        <end position="375"/>
    </location>
</feature>
<feature type="active site" evidence="1">
    <location>
        <position position="68"/>
    </location>
</feature>
<feature type="active site" description="Proton acceptor" evidence="1">
    <location>
        <position position="133"/>
    </location>
</feature>
<feature type="binding site" evidence="1">
    <location>
        <position position="66"/>
    </location>
    <ligand>
        <name>Zn(2+)</name>
        <dbReference type="ChEBI" id="CHEBI:29105"/>
        <label>1</label>
    </ligand>
</feature>
<feature type="binding site" evidence="1">
    <location>
        <position position="99"/>
    </location>
    <ligand>
        <name>Zn(2+)</name>
        <dbReference type="ChEBI" id="CHEBI:29105"/>
        <label>1</label>
    </ligand>
</feature>
<feature type="binding site" evidence="1">
    <location>
        <position position="99"/>
    </location>
    <ligand>
        <name>Zn(2+)</name>
        <dbReference type="ChEBI" id="CHEBI:29105"/>
        <label>2</label>
    </ligand>
</feature>
<feature type="binding site" evidence="1">
    <location>
        <position position="134"/>
    </location>
    <ligand>
        <name>Zn(2+)</name>
        <dbReference type="ChEBI" id="CHEBI:29105"/>
        <label>2</label>
    </ligand>
</feature>
<feature type="binding site" evidence="1">
    <location>
        <position position="162"/>
    </location>
    <ligand>
        <name>Zn(2+)</name>
        <dbReference type="ChEBI" id="CHEBI:29105"/>
        <label>1</label>
    </ligand>
</feature>
<feature type="binding site" evidence="1">
    <location>
        <position position="348"/>
    </location>
    <ligand>
        <name>Zn(2+)</name>
        <dbReference type="ChEBI" id="CHEBI:29105"/>
        <label>2</label>
    </ligand>
</feature>
<sequence>MSCPVIELTQQLIRRPSLSPDDAGCQALMIERLRKIGFTIEHMDFGDTQNFWAWRGRGETLAFAGHTDVVPAGDVDRWINPPFEPTIRDGMLFGRGAADMKGSLAAMVVAAERFVAQHPHHRGRLAFLITSDEEASAKNGTVKVVEALMARNERLDYCLVGEPSSTEIVGDVVKNGRRGSLTCNLTIHGVQGHVAYPHLADNPVHRAAPFLNELVAIEWDRGNDFFPATSMQVANIQAGTGSNNVIPGELFVQFNFRFSTELTDEMIKERVHALLEKHQLRYTVDWWLSGQPFLTARGKLVDAVVNAIEHYNEIKPQLLTTGGTSDGRFIARMGAQVVELGPVNATIHKINECVNAADLQLLARMYQRIMEQLVA</sequence>
<accession>A9N2Z9</accession>
<proteinExistence type="inferred from homology"/>
<protein>
    <recommendedName>
        <fullName evidence="1">Succinyl-diaminopimelate desuccinylase</fullName>
        <shortName evidence="1">SDAP desuccinylase</shortName>
        <ecNumber evidence="1">3.5.1.18</ecNumber>
    </recommendedName>
    <alternativeName>
        <fullName evidence="1">N-succinyl-LL-2,6-diaminoheptanedioate amidohydrolase</fullName>
    </alternativeName>
</protein>
<name>DAPE_SALPB</name>
<organism>
    <name type="scientific">Salmonella paratyphi B (strain ATCC BAA-1250 / SPB7)</name>
    <dbReference type="NCBI Taxonomy" id="1016998"/>
    <lineage>
        <taxon>Bacteria</taxon>
        <taxon>Pseudomonadati</taxon>
        <taxon>Pseudomonadota</taxon>
        <taxon>Gammaproteobacteria</taxon>
        <taxon>Enterobacterales</taxon>
        <taxon>Enterobacteriaceae</taxon>
        <taxon>Salmonella</taxon>
    </lineage>
</organism>
<gene>
    <name evidence="1" type="primary">dapE</name>
    <name type="ordered locus">SPAB_00466</name>
</gene>
<evidence type="ECO:0000255" key="1">
    <source>
        <dbReference type="HAMAP-Rule" id="MF_01690"/>
    </source>
</evidence>
<keyword id="KW-0028">Amino-acid biosynthesis</keyword>
<keyword id="KW-0170">Cobalt</keyword>
<keyword id="KW-0220">Diaminopimelate biosynthesis</keyword>
<keyword id="KW-0378">Hydrolase</keyword>
<keyword id="KW-0457">Lysine biosynthesis</keyword>
<keyword id="KW-0479">Metal-binding</keyword>
<keyword id="KW-0862">Zinc</keyword>
<comment type="function">
    <text evidence="1">Catalyzes the hydrolysis of N-succinyl-L,L-diaminopimelic acid (SDAP), forming succinate and LL-2,6-diaminopimelate (DAP), an intermediate involved in the bacterial biosynthesis of lysine and meso-diaminopimelic acid, an essential component of bacterial cell walls.</text>
</comment>
<comment type="catalytic activity">
    <reaction evidence="1">
        <text>N-succinyl-(2S,6S)-2,6-diaminopimelate + H2O = (2S,6S)-2,6-diaminopimelate + succinate</text>
        <dbReference type="Rhea" id="RHEA:22608"/>
        <dbReference type="ChEBI" id="CHEBI:15377"/>
        <dbReference type="ChEBI" id="CHEBI:30031"/>
        <dbReference type="ChEBI" id="CHEBI:57609"/>
        <dbReference type="ChEBI" id="CHEBI:58087"/>
        <dbReference type="EC" id="3.5.1.18"/>
    </reaction>
</comment>
<comment type="cofactor">
    <cofactor evidence="1">
        <name>Zn(2+)</name>
        <dbReference type="ChEBI" id="CHEBI:29105"/>
    </cofactor>
    <cofactor evidence="1">
        <name>Co(2+)</name>
        <dbReference type="ChEBI" id="CHEBI:48828"/>
    </cofactor>
    <text evidence="1">Binds 2 Zn(2+) or Co(2+) ions per subunit.</text>
</comment>
<comment type="pathway">
    <text evidence="1">Amino-acid biosynthesis; L-lysine biosynthesis via DAP pathway; LL-2,6-diaminopimelate from (S)-tetrahydrodipicolinate (succinylase route): step 3/3.</text>
</comment>
<comment type="subunit">
    <text evidence="1">Homodimer.</text>
</comment>
<comment type="similarity">
    <text evidence="1">Belongs to the peptidase M20A family. DapE subfamily.</text>
</comment>
<reference key="1">
    <citation type="submission" date="2007-11" db="EMBL/GenBank/DDBJ databases">
        <authorList>
            <consortium name="The Salmonella enterica serovar Paratyphi B Genome Sequencing Project"/>
            <person name="McClelland M."/>
            <person name="Sanderson E.K."/>
            <person name="Porwollik S."/>
            <person name="Spieth J."/>
            <person name="Clifton W.S."/>
            <person name="Fulton R."/>
            <person name="Cordes M."/>
            <person name="Wollam A."/>
            <person name="Shah N."/>
            <person name="Pepin K."/>
            <person name="Bhonagiri V."/>
            <person name="Nash W."/>
            <person name="Johnson M."/>
            <person name="Thiruvilangam P."/>
            <person name="Wilson R."/>
        </authorList>
    </citation>
    <scope>NUCLEOTIDE SEQUENCE [LARGE SCALE GENOMIC DNA]</scope>
    <source>
        <strain>ATCC BAA-1250 / SPB7</strain>
    </source>
</reference>
<dbReference type="EC" id="3.5.1.18" evidence="1"/>
<dbReference type="EMBL" id="CP000886">
    <property type="protein sequence ID" value="ABX65899.1"/>
    <property type="molecule type" value="Genomic_DNA"/>
</dbReference>
<dbReference type="RefSeq" id="WP_001277825.1">
    <property type="nucleotide sequence ID" value="NC_010102.1"/>
</dbReference>
<dbReference type="SMR" id="A9N2Z9"/>
<dbReference type="MEROPS" id="M20.010"/>
<dbReference type="KEGG" id="spq:SPAB_00466"/>
<dbReference type="PATRIC" id="fig|1016998.12.peg.440"/>
<dbReference type="HOGENOM" id="CLU_021802_4_0_6"/>
<dbReference type="BioCyc" id="SENT1016998:SPAB_RS01900-MONOMER"/>
<dbReference type="UniPathway" id="UPA00034">
    <property type="reaction ID" value="UER00021"/>
</dbReference>
<dbReference type="Proteomes" id="UP000008556">
    <property type="component" value="Chromosome"/>
</dbReference>
<dbReference type="GO" id="GO:0008777">
    <property type="term" value="F:acetylornithine deacetylase activity"/>
    <property type="evidence" value="ECO:0007669"/>
    <property type="project" value="TreeGrafter"/>
</dbReference>
<dbReference type="GO" id="GO:0050897">
    <property type="term" value="F:cobalt ion binding"/>
    <property type="evidence" value="ECO:0007669"/>
    <property type="project" value="UniProtKB-UniRule"/>
</dbReference>
<dbReference type="GO" id="GO:0009014">
    <property type="term" value="F:succinyl-diaminopimelate desuccinylase activity"/>
    <property type="evidence" value="ECO:0007669"/>
    <property type="project" value="UniProtKB-UniRule"/>
</dbReference>
<dbReference type="GO" id="GO:0008270">
    <property type="term" value="F:zinc ion binding"/>
    <property type="evidence" value="ECO:0007669"/>
    <property type="project" value="UniProtKB-UniRule"/>
</dbReference>
<dbReference type="GO" id="GO:0019877">
    <property type="term" value="P:diaminopimelate biosynthetic process"/>
    <property type="evidence" value="ECO:0007669"/>
    <property type="project" value="UniProtKB-UniRule"/>
</dbReference>
<dbReference type="GO" id="GO:0006526">
    <property type="term" value="P:L-arginine biosynthetic process"/>
    <property type="evidence" value="ECO:0007669"/>
    <property type="project" value="TreeGrafter"/>
</dbReference>
<dbReference type="GO" id="GO:0009089">
    <property type="term" value="P:lysine biosynthetic process via diaminopimelate"/>
    <property type="evidence" value="ECO:0007669"/>
    <property type="project" value="UniProtKB-UniRule"/>
</dbReference>
<dbReference type="CDD" id="cd03891">
    <property type="entry name" value="M20_DapE_proteobac"/>
    <property type="match status" value="1"/>
</dbReference>
<dbReference type="FunFam" id="3.30.70.360:FF:000011">
    <property type="entry name" value="Succinyl-diaminopimelate desuccinylase"/>
    <property type="match status" value="1"/>
</dbReference>
<dbReference type="FunFam" id="3.40.630.10:FF:000005">
    <property type="entry name" value="Succinyl-diaminopimelate desuccinylase"/>
    <property type="match status" value="1"/>
</dbReference>
<dbReference type="FunFam" id="3.40.630.10:FF:000010">
    <property type="entry name" value="Succinyl-diaminopimelate desuccinylase"/>
    <property type="match status" value="1"/>
</dbReference>
<dbReference type="Gene3D" id="3.40.630.10">
    <property type="entry name" value="Zn peptidases"/>
    <property type="match status" value="2"/>
</dbReference>
<dbReference type="HAMAP" id="MF_01690">
    <property type="entry name" value="DapE"/>
    <property type="match status" value="1"/>
</dbReference>
<dbReference type="InterPro" id="IPR001261">
    <property type="entry name" value="ArgE/DapE_CS"/>
</dbReference>
<dbReference type="InterPro" id="IPR036264">
    <property type="entry name" value="Bact_exopeptidase_dim_dom"/>
</dbReference>
<dbReference type="InterPro" id="IPR005941">
    <property type="entry name" value="DapE_proteobac"/>
</dbReference>
<dbReference type="InterPro" id="IPR002933">
    <property type="entry name" value="Peptidase_M20"/>
</dbReference>
<dbReference type="InterPro" id="IPR011650">
    <property type="entry name" value="Peptidase_M20_dimer"/>
</dbReference>
<dbReference type="InterPro" id="IPR050072">
    <property type="entry name" value="Peptidase_M20A"/>
</dbReference>
<dbReference type="NCBIfam" id="TIGR01246">
    <property type="entry name" value="dapE_proteo"/>
    <property type="match status" value="1"/>
</dbReference>
<dbReference type="NCBIfam" id="NF009557">
    <property type="entry name" value="PRK13009.1"/>
    <property type="match status" value="1"/>
</dbReference>
<dbReference type="PANTHER" id="PTHR43808">
    <property type="entry name" value="ACETYLORNITHINE DEACETYLASE"/>
    <property type="match status" value="1"/>
</dbReference>
<dbReference type="PANTHER" id="PTHR43808:SF31">
    <property type="entry name" value="N-ACETYL-L-CITRULLINE DEACETYLASE"/>
    <property type="match status" value="1"/>
</dbReference>
<dbReference type="Pfam" id="PF07687">
    <property type="entry name" value="M20_dimer"/>
    <property type="match status" value="1"/>
</dbReference>
<dbReference type="Pfam" id="PF01546">
    <property type="entry name" value="Peptidase_M20"/>
    <property type="match status" value="1"/>
</dbReference>
<dbReference type="SUPFAM" id="SSF55031">
    <property type="entry name" value="Bacterial exopeptidase dimerisation domain"/>
    <property type="match status" value="1"/>
</dbReference>
<dbReference type="SUPFAM" id="SSF53187">
    <property type="entry name" value="Zn-dependent exopeptidases"/>
    <property type="match status" value="1"/>
</dbReference>
<dbReference type="PROSITE" id="PS00758">
    <property type="entry name" value="ARGE_DAPE_CPG2_1"/>
    <property type="match status" value="1"/>
</dbReference>
<dbReference type="PROSITE" id="PS00759">
    <property type="entry name" value="ARGE_DAPE_CPG2_2"/>
    <property type="match status" value="1"/>
</dbReference>